<comment type="function">
    <text evidence="1">Catalyzes the reversible interconversion of serine and glycine with tetrahydrofolate (THF) serving as the one-carbon carrier. This reaction serves as the major source of one-carbon groups required for the biosynthesis of purines, thymidylate, methionine, and other important biomolecules. Also exhibits THF-independent aldolase activity toward beta-hydroxyamino acids, producing glycine and aldehydes, via a retro-aldol mechanism.</text>
</comment>
<comment type="catalytic activity">
    <reaction evidence="1">
        <text>(6R)-5,10-methylene-5,6,7,8-tetrahydrofolate + glycine + H2O = (6S)-5,6,7,8-tetrahydrofolate + L-serine</text>
        <dbReference type="Rhea" id="RHEA:15481"/>
        <dbReference type="ChEBI" id="CHEBI:15377"/>
        <dbReference type="ChEBI" id="CHEBI:15636"/>
        <dbReference type="ChEBI" id="CHEBI:33384"/>
        <dbReference type="ChEBI" id="CHEBI:57305"/>
        <dbReference type="ChEBI" id="CHEBI:57453"/>
        <dbReference type="EC" id="2.1.2.1"/>
    </reaction>
</comment>
<comment type="cofactor">
    <cofactor evidence="1">
        <name>pyridoxal 5'-phosphate</name>
        <dbReference type="ChEBI" id="CHEBI:597326"/>
    </cofactor>
</comment>
<comment type="pathway">
    <text evidence="1">One-carbon metabolism; tetrahydrofolate interconversion.</text>
</comment>
<comment type="pathway">
    <text evidence="1">Amino-acid biosynthesis; glycine biosynthesis; glycine from L-serine: step 1/1.</text>
</comment>
<comment type="subunit">
    <text evidence="1">Homodimer.</text>
</comment>
<comment type="subcellular location">
    <subcellularLocation>
        <location evidence="1">Cytoplasm</location>
    </subcellularLocation>
</comment>
<comment type="similarity">
    <text evidence="1">Belongs to the SHMT family.</text>
</comment>
<gene>
    <name evidence="1" type="primary">glyA</name>
    <name type="ordered locus">Dred_3162</name>
</gene>
<protein>
    <recommendedName>
        <fullName evidence="1">Serine hydroxymethyltransferase</fullName>
        <shortName evidence="1">SHMT</shortName>
        <shortName evidence="1">Serine methylase</shortName>
        <ecNumber evidence="1">2.1.2.1</ecNumber>
    </recommendedName>
</protein>
<evidence type="ECO:0000255" key="1">
    <source>
        <dbReference type="HAMAP-Rule" id="MF_00051"/>
    </source>
</evidence>
<feature type="chain" id="PRO_1000071130" description="Serine hydroxymethyltransferase">
    <location>
        <begin position="1"/>
        <end position="413"/>
    </location>
</feature>
<feature type="binding site" evidence="1">
    <location>
        <position position="119"/>
    </location>
    <ligand>
        <name>(6S)-5,6,7,8-tetrahydrofolate</name>
        <dbReference type="ChEBI" id="CHEBI:57453"/>
    </ligand>
</feature>
<feature type="binding site" evidence="1">
    <location>
        <begin position="123"/>
        <end position="125"/>
    </location>
    <ligand>
        <name>(6S)-5,6,7,8-tetrahydrofolate</name>
        <dbReference type="ChEBI" id="CHEBI:57453"/>
    </ligand>
</feature>
<feature type="binding site" evidence="1">
    <location>
        <position position="243"/>
    </location>
    <ligand>
        <name>(6S)-5,6,7,8-tetrahydrofolate</name>
        <dbReference type="ChEBI" id="CHEBI:57453"/>
    </ligand>
</feature>
<feature type="site" description="Plays an important role in substrate specificity" evidence="1">
    <location>
        <position position="227"/>
    </location>
</feature>
<feature type="modified residue" description="N6-(pyridoxal phosphate)lysine" evidence="1">
    <location>
        <position position="228"/>
    </location>
</feature>
<sequence>MFNGKLAQTDPELAKAIELEHQRQQRNIELIASENFVSPAVLEAQGSILTNKYAEGYPGKRYYGGCEFVDIAESLAISRAKKLFGADHANVQPHSGAQANFAVYFALLQPGDKILGMNLAHGGHLTHGSPVNVSGKYFNVVAYGVEEDTGCINYEKLREIALQEKPKMIVAGASAYARAIDFKKIGEIAKEIDAYFFVDMAHIAGLVAAGLHQSPVPYADVVTTTTHKTLRGPRGGMILCKEEYAQLIDKAIFPGSQGGPLMHVIAAKAAAFGEALKPEFKAYQQQIINNAQALAKGLLERGFNLVSGGTDNHLILVDLRGTGITGKQAETLLDEVHITCNKNAIPFDPEKPFVTSGIRLGTPAVTTRGFKEKDMDKVAEIIALTLQEKDNPDTQEKARAMVKELCDKYPLYA</sequence>
<accession>A4J9B1</accession>
<dbReference type="EC" id="2.1.2.1" evidence="1"/>
<dbReference type="EMBL" id="CP000612">
    <property type="protein sequence ID" value="ABO51664.1"/>
    <property type="molecule type" value="Genomic_DNA"/>
</dbReference>
<dbReference type="RefSeq" id="WP_011879452.1">
    <property type="nucleotide sequence ID" value="NC_009253.1"/>
</dbReference>
<dbReference type="SMR" id="A4J9B1"/>
<dbReference type="STRING" id="349161.Dred_3162"/>
<dbReference type="KEGG" id="drm:Dred_3162"/>
<dbReference type="eggNOG" id="COG0112">
    <property type="taxonomic scope" value="Bacteria"/>
</dbReference>
<dbReference type="HOGENOM" id="CLU_022477_2_1_9"/>
<dbReference type="OrthoDB" id="9803846at2"/>
<dbReference type="UniPathway" id="UPA00193"/>
<dbReference type="UniPathway" id="UPA00288">
    <property type="reaction ID" value="UER01023"/>
</dbReference>
<dbReference type="Proteomes" id="UP000001556">
    <property type="component" value="Chromosome"/>
</dbReference>
<dbReference type="GO" id="GO:0005829">
    <property type="term" value="C:cytosol"/>
    <property type="evidence" value="ECO:0007669"/>
    <property type="project" value="TreeGrafter"/>
</dbReference>
<dbReference type="GO" id="GO:0004372">
    <property type="term" value="F:glycine hydroxymethyltransferase activity"/>
    <property type="evidence" value="ECO:0007669"/>
    <property type="project" value="UniProtKB-UniRule"/>
</dbReference>
<dbReference type="GO" id="GO:0030170">
    <property type="term" value="F:pyridoxal phosphate binding"/>
    <property type="evidence" value="ECO:0007669"/>
    <property type="project" value="UniProtKB-UniRule"/>
</dbReference>
<dbReference type="GO" id="GO:0019264">
    <property type="term" value="P:glycine biosynthetic process from serine"/>
    <property type="evidence" value="ECO:0007669"/>
    <property type="project" value="UniProtKB-UniRule"/>
</dbReference>
<dbReference type="GO" id="GO:0035999">
    <property type="term" value="P:tetrahydrofolate interconversion"/>
    <property type="evidence" value="ECO:0007669"/>
    <property type="project" value="UniProtKB-UniRule"/>
</dbReference>
<dbReference type="CDD" id="cd00378">
    <property type="entry name" value="SHMT"/>
    <property type="match status" value="1"/>
</dbReference>
<dbReference type="FunFam" id="3.40.640.10:FF:000001">
    <property type="entry name" value="Serine hydroxymethyltransferase"/>
    <property type="match status" value="1"/>
</dbReference>
<dbReference type="FunFam" id="3.90.1150.10:FF:000003">
    <property type="entry name" value="Serine hydroxymethyltransferase"/>
    <property type="match status" value="1"/>
</dbReference>
<dbReference type="Gene3D" id="3.90.1150.10">
    <property type="entry name" value="Aspartate Aminotransferase, domain 1"/>
    <property type="match status" value="1"/>
</dbReference>
<dbReference type="Gene3D" id="3.40.640.10">
    <property type="entry name" value="Type I PLP-dependent aspartate aminotransferase-like (Major domain)"/>
    <property type="match status" value="1"/>
</dbReference>
<dbReference type="HAMAP" id="MF_00051">
    <property type="entry name" value="SHMT"/>
    <property type="match status" value="1"/>
</dbReference>
<dbReference type="InterPro" id="IPR015424">
    <property type="entry name" value="PyrdxlP-dep_Trfase"/>
</dbReference>
<dbReference type="InterPro" id="IPR015421">
    <property type="entry name" value="PyrdxlP-dep_Trfase_major"/>
</dbReference>
<dbReference type="InterPro" id="IPR015422">
    <property type="entry name" value="PyrdxlP-dep_Trfase_small"/>
</dbReference>
<dbReference type="InterPro" id="IPR001085">
    <property type="entry name" value="Ser_HO-MeTrfase"/>
</dbReference>
<dbReference type="InterPro" id="IPR049943">
    <property type="entry name" value="Ser_HO-MeTrfase-like"/>
</dbReference>
<dbReference type="InterPro" id="IPR019798">
    <property type="entry name" value="Ser_HO-MeTrfase_PLP_BS"/>
</dbReference>
<dbReference type="InterPro" id="IPR039429">
    <property type="entry name" value="SHMT-like_dom"/>
</dbReference>
<dbReference type="NCBIfam" id="NF000586">
    <property type="entry name" value="PRK00011.1"/>
    <property type="match status" value="1"/>
</dbReference>
<dbReference type="PANTHER" id="PTHR11680">
    <property type="entry name" value="SERINE HYDROXYMETHYLTRANSFERASE"/>
    <property type="match status" value="1"/>
</dbReference>
<dbReference type="PANTHER" id="PTHR11680:SF35">
    <property type="entry name" value="SERINE HYDROXYMETHYLTRANSFERASE 1"/>
    <property type="match status" value="1"/>
</dbReference>
<dbReference type="Pfam" id="PF00464">
    <property type="entry name" value="SHMT"/>
    <property type="match status" value="1"/>
</dbReference>
<dbReference type="PIRSF" id="PIRSF000412">
    <property type="entry name" value="SHMT"/>
    <property type="match status" value="1"/>
</dbReference>
<dbReference type="SUPFAM" id="SSF53383">
    <property type="entry name" value="PLP-dependent transferases"/>
    <property type="match status" value="1"/>
</dbReference>
<dbReference type="PROSITE" id="PS00096">
    <property type="entry name" value="SHMT"/>
    <property type="match status" value="1"/>
</dbReference>
<name>GLYA_DESRM</name>
<organism>
    <name type="scientific">Desulforamulus reducens (strain ATCC BAA-1160 / DSM 100696 / MI-1)</name>
    <name type="common">Desulfotomaculum reducens</name>
    <dbReference type="NCBI Taxonomy" id="349161"/>
    <lineage>
        <taxon>Bacteria</taxon>
        <taxon>Bacillati</taxon>
        <taxon>Bacillota</taxon>
        <taxon>Clostridia</taxon>
        <taxon>Eubacteriales</taxon>
        <taxon>Peptococcaceae</taxon>
        <taxon>Desulforamulus</taxon>
    </lineage>
</organism>
<keyword id="KW-0028">Amino-acid biosynthesis</keyword>
<keyword id="KW-0963">Cytoplasm</keyword>
<keyword id="KW-0554">One-carbon metabolism</keyword>
<keyword id="KW-0663">Pyridoxal phosphate</keyword>
<keyword id="KW-1185">Reference proteome</keyword>
<keyword id="KW-0808">Transferase</keyword>
<proteinExistence type="inferred from homology"/>
<reference key="1">
    <citation type="submission" date="2007-03" db="EMBL/GenBank/DDBJ databases">
        <title>Complete sequence of Desulfotomaculum reducens MI-1.</title>
        <authorList>
            <consortium name="US DOE Joint Genome Institute"/>
            <person name="Copeland A."/>
            <person name="Lucas S."/>
            <person name="Lapidus A."/>
            <person name="Barry K."/>
            <person name="Detter J.C."/>
            <person name="Glavina del Rio T."/>
            <person name="Hammon N."/>
            <person name="Israni S."/>
            <person name="Dalin E."/>
            <person name="Tice H."/>
            <person name="Pitluck S."/>
            <person name="Sims D."/>
            <person name="Brettin T."/>
            <person name="Bruce D."/>
            <person name="Han C."/>
            <person name="Tapia R."/>
            <person name="Schmutz J."/>
            <person name="Larimer F."/>
            <person name="Land M."/>
            <person name="Hauser L."/>
            <person name="Kyrpides N."/>
            <person name="Kim E."/>
            <person name="Tebo B.M."/>
            <person name="Richardson P."/>
        </authorList>
    </citation>
    <scope>NUCLEOTIDE SEQUENCE [LARGE SCALE GENOMIC DNA]</scope>
    <source>
        <strain>ATCC BAA-1160 / DSM 100696 / MI-1</strain>
    </source>
</reference>